<comment type="function">
    <text evidence="1">Bidirectionally degrades single-stranded DNA into large acid-insoluble oligonucleotides, which are then degraded further into small acid-soluble oligonucleotides.</text>
</comment>
<comment type="catalytic activity">
    <reaction evidence="1">
        <text>Exonucleolytic cleavage in either 5'- to 3'- or 3'- to 5'-direction to yield nucleoside 5'-phosphates.</text>
        <dbReference type="EC" id="3.1.11.6"/>
    </reaction>
</comment>
<comment type="subunit">
    <text evidence="1">Heterooligomer composed of large and small subunits.</text>
</comment>
<comment type="subcellular location">
    <subcellularLocation>
        <location evidence="1">Cytoplasm</location>
    </subcellularLocation>
</comment>
<comment type="similarity">
    <text evidence="1">Belongs to the XseA family.</text>
</comment>
<gene>
    <name evidence="1" type="primary">xseA</name>
    <name type="ordered locus">SCO5056</name>
    <name type="ORF">SCK7.29c</name>
</gene>
<evidence type="ECO:0000255" key="1">
    <source>
        <dbReference type="HAMAP-Rule" id="MF_00378"/>
    </source>
</evidence>
<protein>
    <recommendedName>
        <fullName evidence="1">Exodeoxyribonuclease 7 large subunit</fullName>
        <ecNumber evidence="1">3.1.11.6</ecNumber>
    </recommendedName>
    <alternativeName>
        <fullName evidence="1">Exodeoxyribonuclease VII large subunit</fullName>
        <shortName evidence="1">Exonuclease VII large subunit</shortName>
    </alternativeName>
</protein>
<accession>Q9FBM3</accession>
<sequence>MAANSTPEGPLPVGEVSRLIGGWIDRLGAVWVEGQITQLSRRPGAGVVFLTLRDPSYDISVSVTCYRQVFDAVADVVGEGARVVVHAKPEWYAPRGQLSLRAAEIKPVGVGELLARLEQLKKALAREGLFAAERKQPLPFLPQLIGLVCGRASAAERDVLENARHRWPAVRFEVRNVPVQGVHAVPQVVQAVKELDARDDVDVIVVARGGGSVEDLLPFSDEQLVRAVAACRTPVVSAIGHEPDSPLLDLVADLRASTPTDAAKKVVPDVGEEYERVRLLRDRARRCVAAFVDREERGLAHALARPSIQDPHRMIEERAEQVTALLDRGRRSLRHHLDRADSELTHTHARVVALSPAATLKRGYAVLQRADGHAVRDPGEVEPGETLRARVSEGDFSVRVDA</sequence>
<proteinExistence type="inferred from homology"/>
<feature type="chain" id="PRO_0000197889" description="Exodeoxyribonuclease 7 large subunit">
    <location>
        <begin position="1"/>
        <end position="402"/>
    </location>
</feature>
<name>EX7L_STRCO</name>
<keyword id="KW-0963">Cytoplasm</keyword>
<keyword id="KW-0269">Exonuclease</keyword>
<keyword id="KW-0378">Hydrolase</keyword>
<keyword id="KW-0540">Nuclease</keyword>
<keyword id="KW-1185">Reference proteome</keyword>
<reference key="1">
    <citation type="journal article" date="2002" name="Nature">
        <title>Complete genome sequence of the model actinomycete Streptomyces coelicolor A3(2).</title>
        <authorList>
            <person name="Bentley S.D."/>
            <person name="Chater K.F."/>
            <person name="Cerdeno-Tarraga A.-M."/>
            <person name="Challis G.L."/>
            <person name="Thomson N.R."/>
            <person name="James K.D."/>
            <person name="Harris D.E."/>
            <person name="Quail M.A."/>
            <person name="Kieser H."/>
            <person name="Harper D."/>
            <person name="Bateman A."/>
            <person name="Brown S."/>
            <person name="Chandra G."/>
            <person name="Chen C.W."/>
            <person name="Collins M."/>
            <person name="Cronin A."/>
            <person name="Fraser A."/>
            <person name="Goble A."/>
            <person name="Hidalgo J."/>
            <person name="Hornsby T."/>
            <person name="Howarth S."/>
            <person name="Huang C.-H."/>
            <person name="Kieser T."/>
            <person name="Larke L."/>
            <person name="Murphy L.D."/>
            <person name="Oliver K."/>
            <person name="O'Neil S."/>
            <person name="Rabbinowitsch E."/>
            <person name="Rajandream M.A."/>
            <person name="Rutherford K.M."/>
            <person name="Rutter S."/>
            <person name="Seeger K."/>
            <person name="Saunders D."/>
            <person name="Sharp S."/>
            <person name="Squares R."/>
            <person name="Squares S."/>
            <person name="Taylor K."/>
            <person name="Warren T."/>
            <person name="Wietzorrek A."/>
            <person name="Woodward J.R."/>
            <person name="Barrell B.G."/>
            <person name="Parkhill J."/>
            <person name="Hopwood D.A."/>
        </authorList>
    </citation>
    <scope>NUCLEOTIDE SEQUENCE [LARGE SCALE GENOMIC DNA]</scope>
    <source>
        <strain>ATCC BAA-471 / A3(2) / M145</strain>
    </source>
</reference>
<dbReference type="EC" id="3.1.11.6" evidence="1"/>
<dbReference type="EMBL" id="AL939122">
    <property type="protein sequence ID" value="CAC05901.1"/>
    <property type="molecule type" value="Genomic_DNA"/>
</dbReference>
<dbReference type="RefSeq" id="NP_629208.1">
    <property type="nucleotide sequence ID" value="NC_003888.3"/>
</dbReference>
<dbReference type="RefSeq" id="WP_011030027.1">
    <property type="nucleotide sequence ID" value="NZ_CP042324.1"/>
</dbReference>
<dbReference type="SMR" id="Q9FBM3"/>
<dbReference type="FunCoup" id="Q9FBM3">
    <property type="interactions" value="100"/>
</dbReference>
<dbReference type="STRING" id="100226.gene:17762705"/>
<dbReference type="PaxDb" id="100226-SCO5056"/>
<dbReference type="KEGG" id="sco:SCO5056"/>
<dbReference type="eggNOG" id="COG1570">
    <property type="taxonomic scope" value="Bacteria"/>
</dbReference>
<dbReference type="HOGENOM" id="CLU_023625_2_1_11"/>
<dbReference type="InParanoid" id="Q9FBM3"/>
<dbReference type="OrthoDB" id="9802795at2"/>
<dbReference type="PhylomeDB" id="Q9FBM3"/>
<dbReference type="Proteomes" id="UP000001973">
    <property type="component" value="Chromosome"/>
</dbReference>
<dbReference type="GO" id="GO:0005737">
    <property type="term" value="C:cytoplasm"/>
    <property type="evidence" value="ECO:0007669"/>
    <property type="project" value="UniProtKB-SubCell"/>
</dbReference>
<dbReference type="GO" id="GO:0009318">
    <property type="term" value="C:exodeoxyribonuclease VII complex"/>
    <property type="evidence" value="ECO:0007669"/>
    <property type="project" value="InterPro"/>
</dbReference>
<dbReference type="GO" id="GO:0008855">
    <property type="term" value="F:exodeoxyribonuclease VII activity"/>
    <property type="evidence" value="ECO:0007669"/>
    <property type="project" value="UniProtKB-UniRule"/>
</dbReference>
<dbReference type="GO" id="GO:0003676">
    <property type="term" value="F:nucleic acid binding"/>
    <property type="evidence" value="ECO:0007669"/>
    <property type="project" value="InterPro"/>
</dbReference>
<dbReference type="GO" id="GO:0006308">
    <property type="term" value="P:DNA catabolic process"/>
    <property type="evidence" value="ECO:0007669"/>
    <property type="project" value="UniProtKB-UniRule"/>
</dbReference>
<dbReference type="CDD" id="cd04489">
    <property type="entry name" value="ExoVII_LU_OBF"/>
    <property type="match status" value="1"/>
</dbReference>
<dbReference type="HAMAP" id="MF_00378">
    <property type="entry name" value="Exonuc_7_L"/>
    <property type="match status" value="1"/>
</dbReference>
<dbReference type="InterPro" id="IPR003753">
    <property type="entry name" value="Exonuc_VII_L"/>
</dbReference>
<dbReference type="InterPro" id="IPR020579">
    <property type="entry name" value="Exonuc_VII_lsu_C"/>
</dbReference>
<dbReference type="InterPro" id="IPR025824">
    <property type="entry name" value="OB-fold_nuc-bd_dom"/>
</dbReference>
<dbReference type="NCBIfam" id="TIGR00237">
    <property type="entry name" value="xseA"/>
    <property type="match status" value="1"/>
</dbReference>
<dbReference type="PANTHER" id="PTHR30008">
    <property type="entry name" value="EXODEOXYRIBONUCLEASE 7 LARGE SUBUNIT"/>
    <property type="match status" value="1"/>
</dbReference>
<dbReference type="PANTHER" id="PTHR30008:SF0">
    <property type="entry name" value="EXODEOXYRIBONUCLEASE 7 LARGE SUBUNIT"/>
    <property type="match status" value="1"/>
</dbReference>
<dbReference type="Pfam" id="PF02601">
    <property type="entry name" value="Exonuc_VII_L"/>
    <property type="match status" value="2"/>
</dbReference>
<dbReference type="Pfam" id="PF13742">
    <property type="entry name" value="tRNA_anti_2"/>
    <property type="match status" value="1"/>
</dbReference>
<organism>
    <name type="scientific">Streptomyces coelicolor (strain ATCC BAA-471 / A3(2) / M145)</name>
    <dbReference type="NCBI Taxonomy" id="100226"/>
    <lineage>
        <taxon>Bacteria</taxon>
        <taxon>Bacillati</taxon>
        <taxon>Actinomycetota</taxon>
        <taxon>Actinomycetes</taxon>
        <taxon>Kitasatosporales</taxon>
        <taxon>Streptomycetaceae</taxon>
        <taxon>Streptomyces</taxon>
        <taxon>Streptomyces albidoflavus group</taxon>
    </lineage>
</organism>